<accession>A1B507</accession>
<gene>
    <name evidence="1" type="primary">dapD</name>
    <name type="ordered locus">Pden_2514</name>
</gene>
<dbReference type="EC" id="2.3.1.117" evidence="1"/>
<dbReference type="EMBL" id="CP000489">
    <property type="protein sequence ID" value="ABL70601.1"/>
    <property type="molecule type" value="Genomic_DNA"/>
</dbReference>
<dbReference type="RefSeq" id="WP_011748794.1">
    <property type="nucleotide sequence ID" value="NC_008686.1"/>
</dbReference>
<dbReference type="SMR" id="A1B507"/>
<dbReference type="STRING" id="318586.Pden_2514"/>
<dbReference type="EnsemblBacteria" id="ABL70601">
    <property type="protein sequence ID" value="ABL70601"/>
    <property type="gene ID" value="Pden_2514"/>
</dbReference>
<dbReference type="GeneID" id="93450907"/>
<dbReference type="KEGG" id="pde:Pden_2514"/>
<dbReference type="eggNOG" id="COG2171">
    <property type="taxonomic scope" value="Bacteria"/>
</dbReference>
<dbReference type="HOGENOM" id="CLU_050859_0_1_5"/>
<dbReference type="OrthoDB" id="9775362at2"/>
<dbReference type="UniPathway" id="UPA00034">
    <property type="reaction ID" value="UER00019"/>
</dbReference>
<dbReference type="Proteomes" id="UP000000361">
    <property type="component" value="Chromosome 1"/>
</dbReference>
<dbReference type="GO" id="GO:0005737">
    <property type="term" value="C:cytoplasm"/>
    <property type="evidence" value="ECO:0007669"/>
    <property type="project" value="UniProtKB-SubCell"/>
</dbReference>
<dbReference type="GO" id="GO:0008666">
    <property type="term" value="F:2,3,4,5-tetrahydropyridine-2,6-dicarboxylate N-succinyltransferase activity"/>
    <property type="evidence" value="ECO:0007669"/>
    <property type="project" value="UniProtKB-UniRule"/>
</dbReference>
<dbReference type="GO" id="GO:0016779">
    <property type="term" value="F:nucleotidyltransferase activity"/>
    <property type="evidence" value="ECO:0007669"/>
    <property type="project" value="TreeGrafter"/>
</dbReference>
<dbReference type="GO" id="GO:0019877">
    <property type="term" value="P:diaminopimelate biosynthetic process"/>
    <property type="evidence" value="ECO:0007669"/>
    <property type="project" value="UniProtKB-UniRule"/>
</dbReference>
<dbReference type="GO" id="GO:0009089">
    <property type="term" value="P:lysine biosynthetic process via diaminopimelate"/>
    <property type="evidence" value="ECO:0007669"/>
    <property type="project" value="UniProtKB-UniRule"/>
</dbReference>
<dbReference type="CDD" id="cd03350">
    <property type="entry name" value="LbH_THP_succinylT"/>
    <property type="match status" value="1"/>
</dbReference>
<dbReference type="Gene3D" id="2.160.10.10">
    <property type="entry name" value="Hexapeptide repeat proteins"/>
    <property type="match status" value="1"/>
</dbReference>
<dbReference type="Gene3D" id="1.10.166.10">
    <property type="entry name" value="Tetrahydrodipicolinate-N-succinyltransferase, N-terminal domain"/>
    <property type="match status" value="1"/>
</dbReference>
<dbReference type="HAMAP" id="MF_00811">
    <property type="entry name" value="DapD"/>
    <property type="match status" value="1"/>
</dbReference>
<dbReference type="InterPro" id="IPR005664">
    <property type="entry name" value="DapD_Trfase_Hexpep_rpt_fam"/>
</dbReference>
<dbReference type="InterPro" id="IPR001451">
    <property type="entry name" value="Hexapep"/>
</dbReference>
<dbReference type="InterPro" id="IPR018357">
    <property type="entry name" value="Hexapep_transf_CS"/>
</dbReference>
<dbReference type="InterPro" id="IPR023180">
    <property type="entry name" value="THP_succinylTrfase_dom1"/>
</dbReference>
<dbReference type="InterPro" id="IPR037133">
    <property type="entry name" value="THP_succinylTrfase_N_sf"/>
</dbReference>
<dbReference type="InterPro" id="IPR011004">
    <property type="entry name" value="Trimer_LpxA-like_sf"/>
</dbReference>
<dbReference type="NCBIfam" id="TIGR00965">
    <property type="entry name" value="dapD"/>
    <property type="match status" value="1"/>
</dbReference>
<dbReference type="NCBIfam" id="NF008808">
    <property type="entry name" value="PRK11830.1"/>
    <property type="match status" value="1"/>
</dbReference>
<dbReference type="PANTHER" id="PTHR19136:SF52">
    <property type="entry name" value="2,3,4,5-TETRAHYDROPYRIDINE-2,6-DICARBOXYLATE N-SUCCINYLTRANSFERASE"/>
    <property type="match status" value="1"/>
</dbReference>
<dbReference type="PANTHER" id="PTHR19136">
    <property type="entry name" value="MOLYBDENUM COFACTOR GUANYLYLTRANSFERASE"/>
    <property type="match status" value="1"/>
</dbReference>
<dbReference type="Pfam" id="PF14602">
    <property type="entry name" value="Hexapep_2"/>
    <property type="match status" value="1"/>
</dbReference>
<dbReference type="Pfam" id="PF14805">
    <property type="entry name" value="THDPS_N_2"/>
    <property type="match status" value="1"/>
</dbReference>
<dbReference type="SUPFAM" id="SSF51161">
    <property type="entry name" value="Trimeric LpxA-like enzymes"/>
    <property type="match status" value="1"/>
</dbReference>
<dbReference type="PROSITE" id="PS00101">
    <property type="entry name" value="HEXAPEP_TRANSFERASES"/>
    <property type="match status" value="1"/>
</dbReference>
<name>DAPD_PARDP</name>
<sequence length="274" mass="29422">MSNDALEAAIESAWEIRDQITPATRGEVRDAVEATLEALDKGVLRVAEKRGSDWHVNQWAKKAVLLGFRLKDMEVHMGGPQGGTWWDKVDSKFAHWGEAQWQAAGFRAVPNCVVRRSAYIAKGVVLMPSFVNLGAYVDEGTMVDTWATVGSCAQIGKNVHLSGGVGIGGVLEPMQAGPTIIEDNCFIGARSEVVEGCIVREGSVLGMGVFIGKSTKIVDRETGEVMYGEVPAGSVVVAGSMPSKNGVNLYCAVIVKRVDAQTRSKTSINELLRD</sequence>
<evidence type="ECO:0000255" key="1">
    <source>
        <dbReference type="HAMAP-Rule" id="MF_00811"/>
    </source>
</evidence>
<keyword id="KW-0012">Acyltransferase</keyword>
<keyword id="KW-0028">Amino-acid biosynthesis</keyword>
<keyword id="KW-0963">Cytoplasm</keyword>
<keyword id="KW-0220">Diaminopimelate biosynthesis</keyword>
<keyword id="KW-0457">Lysine biosynthesis</keyword>
<keyword id="KW-1185">Reference proteome</keyword>
<keyword id="KW-0677">Repeat</keyword>
<keyword id="KW-0808">Transferase</keyword>
<reference key="1">
    <citation type="submission" date="2006-12" db="EMBL/GenBank/DDBJ databases">
        <title>Complete sequence of chromosome 1 of Paracoccus denitrificans PD1222.</title>
        <authorList>
            <person name="Copeland A."/>
            <person name="Lucas S."/>
            <person name="Lapidus A."/>
            <person name="Barry K."/>
            <person name="Detter J.C."/>
            <person name="Glavina del Rio T."/>
            <person name="Hammon N."/>
            <person name="Israni S."/>
            <person name="Dalin E."/>
            <person name="Tice H."/>
            <person name="Pitluck S."/>
            <person name="Munk A.C."/>
            <person name="Brettin T."/>
            <person name="Bruce D."/>
            <person name="Han C."/>
            <person name="Tapia R."/>
            <person name="Gilna P."/>
            <person name="Schmutz J."/>
            <person name="Larimer F."/>
            <person name="Land M."/>
            <person name="Hauser L."/>
            <person name="Kyrpides N."/>
            <person name="Lykidis A."/>
            <person name="Spiro S."/>
            <person name="Richardson D.J."/>
            <person name="Moir J.W.B."/>
            <person name="Ferguson S.J."/>
            <person name="van Spanning R.J.M."/>
            <person name="Richardson P."/>
        </authorList>
    </citation>
    <scope>NUCLEOTIDE SEQUENCE [LARGE SCALE GENOMIC DNA]</scope>
    <source>
        <strain>Pd 1222</strain>
    </source>
</reference>
<organism>
    <name type="scientific">Paracoccus denitrificans (strain Pd 1222)</name>
    <dbReference type="NCBI Taxonomy" id="318586"/>
    <lineage>
        <taxon>Bacteria</taxon>
        <taxon>Pseudomonadati</taxon>
        <taxon>Pseudomonadota</taxon>
        <taxon>Alphaproteobacteria</taxon>
        <taxon>Rhodobacterales</taxon>
        <taxon>Paracoccaceae</taxon>
        <taxon>Paracoccus</taxon>
    </lineage>
</organism>
<comment type="catalytic activity">
    <reaction evidence="1">
        <text>(S)-2,3,4,5-tetrahydrodipicolinate + succinyl-CoA + H2O = (S)-2-succinylamino-6-oxoheptanedioate + CoA</text>
        <dbReference type="Rhea" id="RHEA:17325"/>
        <dbReference type="ChEBI" id="CHEBI:15377"/>
        <dbReference type="ChEBI" id="CHEBI:15685"/>
        <dbReference type="ChEBI" id="CHEBI:16845"/>
        <dbReference type="ChEBI" id="CHEBI:57287"/>
        <dbReference type="ChEBI" id="CHEBI:57292"/>
        <dbReference type="EC" id="2.3.1.117"/>
    </reaction>
</comment>
<comment type="pathway">
    <text evidence="1">Amino-acid biosynthesis; L-lysine biosynthesis via DAP pathway; LL-2,6-diaminopimelate from (S)-tetrahydrodipicolinate (succinylase route): step 1/3.</text>
</comment>
<comment type="subunit">
    <text evidence="1">Homotrimer.</text>
</comment>
<comment type="subcellular location">
    <subcellularLocation>
        <location evidence="1">Cytoplasm</location>
    </subcellularLocation>
</comment>
<comment type="similarity">
    <text evidence="1">Belongs to the transferase hexapeptide repeat family.</text>
</comment>
<protein>
    <recommendedName>
        <fullName evidence="1">2,3,4,5-tetrahydropyridine-2,6-dicarboxylate N-succinyltransferase</fullName>
        <ecNumber evidence="1">2.3.1.117</ecNumber>
    </recommendedName>
    <alternativeName>
        <fullName evidence="1">Tetrahydrodipicolinate N-succinyltransferase</fullName>
        <shortName evidence="1">THDP succinyltransferase</shortName>
        <shortName evidence="1">THP succinyltransferase</shortName>
        <shortName evidence="1">Tetrahydropicolinate succinylase</shortName>
    </alternativeName>
</protein>
<proteinExistence type="inferred from homology"/>
<feature type="chain" id="PRO_1000047161" description="2,3,4,5-tetrahydropyridine-2,6-dicarboxylate N-succinyltransferase">
    <location>
        <begin position="1"/>
        <end position="274"/>
    </location>
</feature>
<feature type="binding site" evidence="1">
    <location>
        <position position="107"/>
    </location>
    <ligand>
        <name>substrate</name>
    </ligand>
</feature>
<feature type="binding site" evidence="1">
    <location>
        <position position="144"/>
    </location>
    <ligand>
        <name>substrate</name>
    </ligand>
</feature>